<keyword id="KW-0963">Cytoplasm</keyword>
<keyword id="KW-0521">NADP</keyword>
<keyword id="KW-0560">Oxidoreductase</keyword>
<keyword id="KW-0671">Queuosine biosynthesis</keyword>
<keyword id="KW-1185">Reference proteome</keyword>
<organism>
    <name type="scientific">Pseudomonas aeruginosa (strain ATCC 15692 / DSM 22644 / CIP 104116 / JCM 14847 / LMG 12228 / 1C / PRS 101 / PAO1)</name>
    <dbReference type="NCBI Taxonomy" id="208964"/>
    <lineage>
        <taxon>Bacteria</taxon>
        <taxon>Pseudomonadati</taxon>
        <taxon>Pseudomonadota</taxon>
        <taxon>Gammaproteobacteria</taxon>
        <taxon>Pseudomonadales</taxon>
        <taxon>Pseudomonadaceae</taxon>
        <taxon>Pseudomonas</taxon>
    </lineage>
</organism>
<accession>Q9I037</accession>
<proteinExistence type="inferred from homology"/>
<sequence>MQHPAEHSPLGKTSEYVSSYTPSLLFPISRTAKWAELGLSAETLPYRGVDIWNCYELSWLTPAGKPVVAIGEFSIPADSPNIIESKSFKLYLNSLNQSAFDSREALRAVLQKDLSAAVGAPVGVRLRSLDEVAEEGIGRLPGRCIDELDIAVDGYEQPRPELLRCDAGRIVEEQLYSHLLKSNCPVTGQPDWGTLVVDYRGPALDPASLLAYLVSFRQHQDFHEQCVERIFLDLQRLLQPQALSVYARYVRRGGLDINPYRSLAEVAPDNRRLVRQ</sequence>
<protein>
    <recommendedName>
        <fullName evidence="1">NADPH-dependent 7-cyano-7-deazaguanine reductase</fullName>
        <ecNumber evidence="1">1.7.1.13</ecNumber>
    </recommendedName>
    <alternativeName>
        <fullName evidence="1">7-cyano-7-carbaguanine reductase</fullName>
    </alternativeName>
    <alternativeName>
        <fullName evidence="1">NADPH-dependent nitrile oxidoreductase</fullName>
    </alternativeName>
    <alternativeName>
        <fullName evidence="1">PreQ(0) reductase</fullName>
    </alternativeName>
</protein>
<reference key="1">
    <citation type="journal article" date="2000" name="Nature">
        <title>Complete genome sequence of Pseudomonas aeruginosa PAO1, an opportunistic pathogen.</title>
        <authorList>
            <person name="Stover C.K."/>
            <person name="Pham X.-Q.T."/>
            <person name="Erwin A.L."/>
            <person name="Mizoguchi S.D."/>
            <person name="Warrener P."/>
            <person name="Hickey M.J."/>
            <person name="Brinkman F.S.L."/>
            <person name="Hufnagle W.O."/>
            <person name="Kowalik D.J."/>
            <person name="Lagrou M."/>
            <person name="Garber R.L."/>
            <person name="Goltry L."/>
            <person name="Tolentino E."/>
            <person name="Westbrock-Wadman S."/>
            <person name="Yuan Y."/>
            <person name="Brody L.L."/>
            <person name="Coulter S.N."/>
            <person name="Folger K.R."/>
            <person name="Kas A."/>
            <person name="Larbig K."/>
            <person name="Lim R.M."/>
            <person name="Smith K.A."/>
            <person name="Spencer D.H."/>
            <person name="Wong G.K.-S."/>
            <person name="Wu Z."/>
            <person name="Paulsen I.T."/>
            <person name="Reizer J."/>
            <person name="Saier M.H. Jr."/>
            <person name="Hancock R.E.W."/>
            <person name="Lory S."/>
            <person name="Olson M.V."/>
        </authorList>
    </citation>
    <scope>NUCLEOTIDE SEQUENCE [LARGE SCALE GENOMIC DNA]</scope>
    <source>
        <strain>ATCC 15692 / DSM 22644 / CIP 104116 / JCM 14847 / LMG 12228 / 1C / PRS 101 / PAO1</strain>
    </source>
</reference>
<feature type="chain" id="PRO_0000163044" description="NADPH-dependent 7-cyano-7-deazaguanine reductase">
    <location>
        <begin position="1"/>
        <end position="276"/>
    </location>
</feature>
<feature type="active site" description="Thioimide intermediate" evidence="1">
    <location>
        <position position="184"/>
    </location>
</feature>
<feature type="active site" description="Proton donor" evidence="1">
    <location>
        <position position="191"/>
    </location>
</feature>
<feature type="binding site" evidence="1">
    <location>
        <begin position="83"/>
        <end position="85"/>
    </location>
    <ligand>
        <name>substrate</name>
    </ligand>
</feature>
<feature type="binding site" evidence="1">
    <location>
        <begin position="85"/>
        <end position="86"/>
    </location>
    <ligand>
        <name>NADPH</name>
        <dbReference type="ChEBI" id="CHEBI:57783"/>
    </ligand>
</feature>
<feature type="binding site" evidence="1">
    <location>
        <begin position="223"/>
        <end position="224"/>
    </location>
    <ligand>
        <name>substrate</name>
    </ligand>
</feature>
<feature type="binding site" evidence="1">
    <location>
        <begin position="252"/>
        <end position="253"/>
    </location>
    <ligand>
        <name>NADPH</name>
        <dbReference type="ChEBI" id="CHEBI:57783"/>
    </ligand>
</feature>
<dbReference type="EC" id="1.7.1.13" evidence="1"/>
<dbReference type="EMBL" id="AE004091">
    <property type="protein sequence ID" value="AAG06194.1"/>
    <property type="molecule type" value="Genomic_DNA"/>
</dbReference>
<dbReference type="PIR" id="F83296">
    <property type="entry name" value="F83296"/>
</dbReference>
<dbReference type="RefSeq" id="NP_251496.1">
    <property type="nucleotide sequence ID" value="NC_002516.2"/>
</dbReference>
<dbReference type="RefSeq" id="WP_003114774.1">
    <property type="nucleotide sequence ID" value="NZ_QZGE01000011.1"/>
</dbReference>
<dbReference type="SMR" id="Q9I037"/>
<dbReference type="FunCoup" id="Q9I037">
    <property type="interactions" value="112"/>
</dbReference>
<dbReference type="STRING" id="208964.PA2806"/>
<dbReference type="PaxDb" id="208964-PA2806"/>
<dbReference type="DNASU" id="880562"/>
<dbReference type="GeneID" id="880562"/>
<dbReference type="KEGG" id="pae:PA2806"/>
<dbReference type="PATRIC" id="fig|208964.12.peg.2944"/>
<dbReference type="PseudoCAP" id="PA2806"/>
<dbReference type="HOGENOM" id="CLU_054738_0_0_6"/>
<dbReference type="InParanoid" id="Q9I037"/>
<dbReference type="OrthoDB" id="9789995at2"/>
<dbReference type="PhylomeDB" id="Q9I037"/>
<dbReference type="BioCyc" id="PAER208964:G1FZ6-2853-MONOMER"/>
<dbReference type="UniPathway" id="UPA00392"/>
<dbReference type="Proteomes" id="UP000002438">
    <property type="component" value="Chromosome"/>
</dbReference>
<dbReference type="GO" id="GO:0005829">
    <property type="term" value="C:cytosol"/>
    <property type="evidence" value="ECO:0000318"/>
    <property type="project" value="GO_Central"/>
</dbReference>
<dbReference type="GO" id="GO:0033739">
    <property type="term" value="F:preQ1 synthase activity"/>
    <property type="evidence" value="ECO:0000318"/>
    <property type="project" value="GO_Central"/>
</dbReference>
<dbReference type="GO" id="GO:0008616">
    <property type="term" value="P:queuosine biosynthetic process"/>
    <property type="evidence" value="ECO:0000318"/>
    <property type="project" value="GO_Central"/>
</dbReference>
<dbReference type="GO" id="GO:0006400">
    <property type="term" value="P:tRNA modification"/>
    <property type="evidence" value="ECO:0007669"/>
    <property type="project" value="UniProtKB-UniRule"/>
</dbReference>
<dbReference type="Gene3D" id="3.30.1130.10">
    <property type="match status" value="2"/>
</dbReference>
<dbReference type="HAMAP" id="MF_00817">
    <property type="entry name" value="QueF_type2"/>
    <property type="match status" value="1"/>
</dbReference>
<dbReference type="InterPro" id="IPR043133">
    <property type="entry name" value="GTP-CH-I_C/QueF"/>
</dbReference>
<dbReference type="InterPro" id="IPR050084">
    <property type="entry name" value="NADPH_dep_7-cyano-7-deazaG_red"/>
</dbReference>
<dbReference type="InterPro" id="IPR029500">
    <property type="entry name" value="QueF"/>
</dbReference>
<dbReference type="InterPro" id="IPR029139">
    <property type="entry name" value="QueF_N"/>
</dbReference>
<dbReference type="InterPro" id="IPR016428">
    <property type="entry name" value="QueF_type2"/>
</dbReference>
<dbReference type="NCBIfam" id="TIGR03138">
    <property type="entry name" value="QueF"/>
    <property type="match status" value="1"/>
</dbReference>
<dbReference type="PANTHER" id="PTHR34354">
    <property type="entry name" value="NADPH-DEPENDENT 7-CYANO-7-DEAZAGUANINE REDUCTASE"/>
    <property type="match status" value="1"/>
</dbReference>
<dbReference type="PANTHER" id="PTHR34354:SF1">
    <property type="entry name" value="NADPH-DEPENDENT 7-CYANO-7-DEAZAGUANINE REDUCTASE"/>
    <property type="match status" value="1"/>
</dbReference>
<dbReference type="Pfam" id="PF14489">
    <property type="entry name" value="QueF"/>
    <property type="match status" value="1"/>
</dbReference>
<dbReference type="Pfam" id="PF14819">
    <property type="entry name" value="QueF_N"/>
    <property type="match status" value="1"/>
</dbReference>
<dbReference type="PIRSF" id="PIRSF004750">
    <property type="entry name" value="Nitrile_oxidored_YqcD_prd"/>
    <property type="match status" value="1"/>
</dbReference>
<dbReference type="SUPFAM" id="SSF55620">
    <property type="entry name" value="Tetrahydrobiopterin biosynthesis enzymes-like"/>
    <property type="match status" value="1"/>
</dbReference>
<name>QUEF_PSEAE</name>
<comment type="function">
    <text evidence="1">Catalyzes the NADPH-dependent reduction of 7-cyano-7-deazaguanine (preQ0) to 7-aminomethyl-7-deazaguanine (preQ1).</text>
</comment>
<comment type="catalytic activity">
    <reaction evidence="1">
        <text>7-aminomethyl-7-carbaguanine + 2 NADP(+) = 7-cyano-7-deazaguanine + 2 NADPH + 3 H(+)</text>
        <dbReference type="Rhea" id="RHEA:13409"/>
        <dbReference type="ChEBI" id="CHEBI:15378"/>
        <dbReference type="ChEBI" id="CHEBI:45075"/>
        <dbReference type="ChEBI" id="CHEBI:57783"/>
        <dbReference type="ChEBI" id="CHEBI:58349"/>
        <dbReference type="ChEBI" id="CHEBI:58703"/>
        <dbReference type="EC" id="1.7.1.13"/>
    </reaction>
</comment>
<comment type="pathway">
    <text evidence="1">tRNA modification; tRNA-queuosine biosynthesis.</text>
</comment>
<comment type="subunit">
    <text evidence="1">Homodimer.</text>
</comment>
<comment type="subcellular location">
    <subcellularLocation>
        <location evidence="1">Cytoplasm</location>
    </subcellularLocation>
</comment>
<comment type="similarity">
    <text evidence="1">Belongs to the GTP cyclohydrolase I family. QueF type 2 subfamily.</text>
</comment>
<gene>
    <name evidence="1" type="primary">queF</name>
    <name type="ordered locus">PA2806</name>
</gene>
<evidence type="ECO:0000255" key="1">
    <source>
        <dbReference type="HAMAP-Rule" id="MF_00817"/>
    </source>
</evidence>